<keyword id="KW-0002">3D-structure</keyword>
<keyword id="KW-0034">Amyloid</keyword>
<keyword id="KW-1003">Cell membrane</keyword>
<keyword id="KW-0186">Copper</keyword>
<keyword id="KW-1015">Disulfide bond</keyword>
<keyword id="KW-0325">Glycoprotein</keyword>
<keyword id="KW-0333">Golgi apparatus</keyword>
<keyword id="KW-0336">GPI-anchor</keyword>
<keyword id="KW-0449">Lipoprotein</keyword>
<keyword id="KW-0472">Membrane</keyword>
<keyword id="KW-0479">Metal-binding</keyword>
<keyword id="KW-0640">Prion</keyword>
<keyword id="KW-1185">Reference proteome</keyword>
<keyword id="KW-0677">Repeat</keyword>
<keyword id="KW-0732">Signal</keyword>
<keyword id="KW-0862">Zinc</keyword>
<accession>O46501</accession>
<dbReference type="EMBL" id="AF022714">
    <property type="protein sequence ID" value="AAB94585.1"/>
    <property type="molecule type" value="Genomic_DNA"/>
</dbReference>
<dbReference type="PDB" id="1XYK">
    <property type="method" value="NMR"/>
    <property type="chains" value="A=124-233"/>
</dbReference>
<dbReference type="PDBsum" id="1XYK"/>
<dbReference type="SMR" id="O46501"/>
<dbReference type="DIP" id="DIP-59793N"/>
<dbReference type="FunCoup" id="O46501">
    <property type="interactions" value="168"/>
</dbReference>
<dbReference type="STRING" id="9615.ENSCAFP00000009107"/>
<dbReference type="GlyCosmos" id="O46501">
    <property type="glycosylation" value="3 sites, No reported glycans"/>
</dbReference>
<dbReference type="PaxDb" id="9612-ENSCAFP00000009107"/>
<dbReference type="InParanoid" id="O46501"/>
<dbReference type="OrthoDB" id="9048788at2759"/>
<dbReference type="EvolutionaryTrace" id="O46501"/>
<dbReference type="Proteomes" id="UP000002254">
    <property type="component" value="Unplaced"/>
</dbReference>
<dbReference type="Proteomes" id="UP000694429">
    <property type="component" value="Unplaced"/>
</dbReference>
<dbReference type="Proteomes" id="UP000694542">
    <property type="component" value="Unplaced"/>
</dbReference>
<dbReference type="Proteomes" id="UP000805418">
    <property type="component" value="Unplaced"/>
</dbReference>
<dbReference type="GO" id="GO:0005794">
    <property type="term" value="C:Golgi apparatus"/>
    <property type="evidence" value="ECO:0007669"/>
    <property type="project" value="UniProtKB-SubCell"/>
</dbReference>
<dbReference type="GO" id="GO:0005886">
    <property type="term" value="C:plasma membrane"/>
    <property type="evidence" value="ECO:0007669"/>
    <property type="project" value="UniProtKB-SubCell"/>
</dbReference>
<dbReference type="GO" id="GO:0098552">
    <property type="term" value="C:side of membrane"/>
    <property type="evidence" value="ECO:0007669"/>
    <property type="project" value="UniProtKB-KW"/>
</dbReference>
<dbReference type="GO" id="GO:0005507">
    <property type="term" value="F:copper ion binding"/>
    <property type="evidence" value="ECO:0000250"/>
    <property type="project" value="UniProtKB"/>
</dbReference>
<dbReference type="GO" id="GO:0051260">
    <property type="term" value="P:protein homooligomerization"/>
    <property type="evidence" value="ECO:0007669"/>
    <property type="project" value="InterPro"/>
</dbReference>
<dbReference type="FunFam" id="1.10.790.10:FF:000001">
    <property type="entry name" value="Major prion protein"/>
    <property type="match status" value="1"/>
</dbReference>
<dbReference type="Gene3D" id="1.10.790.10">
    <property type="entry name" value="Prion/Doppel protein, beta-ribbon domain"/>
    <property type="match status" value="1"/>
</dbReference>
<dbReference type="InterPro" id="IPR000817">
    <property type="entry name" value="Prion"/>
</dbReference>
<dbReference type="InterPro" id="IPR036924">
    <property type="entry name" value="Prion/Doppel_b-ribbon_dom_sf"/>
</dbReference>
<dbReference type="InterPro" id="IPR022416">
    <property type="entry name" value="Prion/Doppel_prot_b-ribbon_dom"/>
</dbReference>
<dbReference type="InterPro" id="IPR020949">
    <property type="entry name" value="Prion_copper_b_octapeptide"/>
</dbReference>
<dbReference type="InterPro" id="IPR025860">
    <property type="entry name" value="Prion_N"/>
</dbReference>
<dbReference type="PANTHER" id="PTHR15506">
    <property type="entry name" value="DOPPEL PRION"/>
    <property type="match status" value="1"/>
</dbReference>
<dbReference type="PANTHER" id="PTHR15506:SF2">
    <property type="entry name" value="MAJOR PRION PROTEIN"/>
    <property type="match status" value="1"/>
</dbReference>
<dbReference type="Pfam" id="PF00377">
    <property type="entry name" value="Prion"/>
    <property type="match status" value="1"/>
</dbReference>
<dbReference type="Pfam" id="PF11587">
    <property type="entry name" value="Prion_bPrPp"/>
    <property type="match status" value="1"/>
</dbReference>
<dbReference type="Pfam" id="PF03991">
    <property type="entry name" value="Prion_octapep"/>
    <property type="match status" value="1"/>
</dbReference>
<dbReference type="PRINTS" id="PR00341">
    <property type="entry name" value="PRION"/>
</dbReference>
<dbReference type="SMART" id="SM00157">
    <property type="entry name" value="PRP"/>
    <property type="match status" value="1"/>
</dbReference>
<dbReference type="SUPFAM" id="SSF54098">
    <property type="entry name" value="Prion-like"/>
    <property type="match status" value="1"/>
</dbReference>
<dbReference type="PROSITE" id="PS00291">
    <property type="entry name" value="PRION_1"/>
    <property type="match status" value="1"/>
</dbReference>
<dbReference type="PROSITE" id="PS00706">
    <property type="entry name" value="PRION_2"/>
    <property type="match status" value="1"/>
</dbReference>
<name>PRIO_CANLF</name>
<protein>
    <recommendedName>
        <fullName>Major prion protein</fullName>
        <shortName>PrP</shortName>
    </recommendedName>
    <cdAntigenName>CD230</cdAntigenName>
</protein>
<comment type="function">
    <text evidence="2 4">Its primary physiological function is unclear. May play a role in neuronal development and synaptic plasticity. May be required for neuronal myelin sheath maintenance. May promote myelin homeostasis through acting as an agonist for ADGRG6 receptor. May play a role in iron uptake and iron homeostasis. Soluble oligomers are toxic to cultured neuroblastoma cells and induce apoptosis (in vitro) (By similarity). Association with GPC1 (via its heparan sulfate chains) targets PRNP to lipid rafts. Also provides Cu(2+) or Zn(2+) for the ascorbate-mediated GPC1 deaminase degradation of its heparan sulfate side chains (By similarity).</text>
</comment>
<comment type="subunit">
    <text evidence="2 4">Monomer and homodimer. Has a tendency to aggregate into amyloid fibrils containing a cross-beta spine, formed by a steric zipper of superposed beta-strands. Soluble oligomers may represent an intermediate stage on the path to fibril formation. Copper binding may promote oligomerization. Interacts with GRB2, APP, ERI3/PRNPIP and SYN1 (By similarity). Mislocalized cytosolically exposed PrP interacts with MGRN1; this interaction alters MGRN1 subcellular location and causes lysosomal enlargement (By similarity). Interacts with APP. Interacts with KIAA1191 (By similarity). Interacts with ADGRG6 (By similarity).</text>
</comment>
<comment type="subcellular location">
    <subcellularLocation>
        <location evidence="2">Cell membrane</location>
        <topology evidence="2">Lipid-anchor</topology>
        <topology evidence="2">GPI-anchor</topology>
    </subcellularLocation>
    <subcellularLocation>
        <location evidence="4">Golgi apparatus</location>
    </subcellularLocation>
    <text evidence="2">Targeted to lipid rafts via association with the heparan sulfate chains of GPC1. Colocates, in the presence of Cu(2+), to vesicles in para- and perinuclear regions, where both proteins undergo internalization. Heparin displaces PRNP from lipid rafts and promotes endocytosis.</text>
</comment>
<comment type="domain">
    <text evidence="2">The normal, monomeric form has a mainly alpha-helical structure. The disease-associated, protease-resistant form forms amyloid fibrils containing a cross-beta spine, formed by a steric zipper of superposed beta-strands. Disease mutations may favor intermolecular contacts via short beta strands, and may thereby trigger oligomerization.</text>
</comment>
<comment type="domain">
    <text evidence="2">Contains an N-terminal region composed of octamer repeats. At low copper concentrations, the sidechains of His residues from three or four repeats contribute to the binding of a single copper ion. Alternatively, a copper ion can be bound by interaction with the sidechain and backbone amide nitrogen of a single His residue. The observed copper binding stoichiometry suggests that two repeat regions cooperate to stabilize the binding of a single copper ion. At higher copper concentrations, each octamer can bind one copper ion by interactions with the His sidechain and Gly backbone atoms. A mixture of binding types may occur, especially in the case of octamer repeat expansion. Copper binding may stabilize the conformation of this region and may promote oligomerization.</text>
</comment>
<comment type="disease">
    <text evidence="7">PrP is found in high quantity in the brain of humans and animals infected with the degenerative neurological diseases kuru, Creutzfeldt-Jakob disease (CJD), Gerstmann-Straussler syndrome (GSS), scrapie, bovine spongiform encephalopathy (BSE), transmissible mink encephalopathy (TME), etc.</text>
</comment>
<comment type="similarity">
    <text evidence="7">Belongs to the prion family.</text>
</comment>
<proteinExistence type="evidence at protein level"/>
<evidence type="ECO:0000250" key="1"/>
<evidence type="ECO:0000250" key="2">
    <source>
        <dbReference type="UniProtKB" id="P04156"/>
    </source>
</evidence>
<evidence type="ECO:0000250" key="3">
    <source>
        <dbReference type="UniProtKB" id="P04273"/>
    </source>
</evidence>
<evidence type="ECO:0000250" key="4">
    <source>
        <dbReference type="UniProtKB" id="P04925"/>
    </source>
</evidence>
<evidence type="ECO:0000255" key="5"/>
<evidence type="ECO:0000256" key="6">
    <source>
        <dbReference type="SAM" id="MobiDB-lite"/>
    </source>
</evidence>
<evidence type="ECO:0000305" key="7"/>
<evidence type="ECO:0007829" key="8">
    <source>
        <dbReference type="PDB" id="1XYK"/>
    </source>
</evidence>
<feature type="signal peptide" evidence="1">
    <location>
        <begin position="1"/>
        <end position="24"/>
    </location>
</feature>
<feature type="chain" id="PRO_0000025639" description="Major prion protein">
    <location>
        <begin position="25"/>
        <end position="232"/>
    </location>
</feature>
<feature type="propeptide" id="PRO_0000025640" description="Removed in mature form" evidence="5">
    <location>
        <begin position="233"/>
        <end position="255"/>
    </location>
</feature>
<feature type="repeat" description="1">
    <location>
        <begin position="54"/>
        <end position="62"/>
    </location>
</feature>
<feature type="repeat" description="2">
    <location>
        <begin position="63"/>
        <end position="70"/>
    </location>
</feature>
<feature type="repeat" description="3">
    <location>
        <begin position="71"/>
        <end position="78"/>
    </location>
</feature>
<feature type="repeat" description="4">
    <location>
        <begin position="79"/>
        <end position="86"/>
    </location>
</feature>
<feature type="repeat" description="5">
    <location>
        <begin position="87"/>
        <end position="94"/>
    </location>
</feature>
<feature type="region of interest" description="Interaction with GRB2, ERI3 and SYN1" evidence="4">
    <location>
        <begin position="25"/>
        <end position="232"/>
    </location>
</feature>
<feature type="region of interest" description="Interaction with ADGRG6" evidence="4">
    <location>
        <begin position="25"/>
        <end position="41"/>
    </location>
</feature>
<feature type="region of interest" description="Disordered" evidence="6">
    <location>
        <begin position="28"/>
        <end position="110"/>
    </location>
</feature>
<feature type="region of interest" description="5 X 8 AA tandem repeats of P-H-G-G-G-W-G-Q">
    <location>
        <begin position="54"/>
        <end position="94"/>
    </location>
</feature>
<feature type="compositionally biased region" description="Gly residues" evidence="6">
    <location>
        <begin position="55"/>
        <end position="97"/>
    </location>
</feature>
<feature type="binding site" evidence="2">
    <location>
        <position position="64"/>
    </location>
    <ligand>
        <name>Cu(2+)</name>
        <dbReference type="ChEBI" id="CHEBI:29036"/>
        <label>1</label>
    </ligand>
</feature>
<feature type="binding site" evidence="2">
    <location>
        <position position="65"/>
    </location>
    <ligand>
        <name>Cu(2+)</name>
        <dbReference type="ChEBI" id="CHEBI:29036"/>
        <label>1</label>
    </ligand>
</feature>
<feature type="binding site" evidence="2">
    <location>
        <position position="66"/>
    </location>
    <ligand>
        <name>Cu(2+)</name>
        <dbReference type="ChEBI" id="CHEBI:29036"/>
        <label>1</label>
    </ligand>
</feature>
<feature type="binding site" evidence="2">
    <location>
        <position position="72"/>
    </location>
    <ligand>
        <name>Cu(2+)</name>
        <dbReference type="ChEBI" id="CHEBI:29036"/>
        <label>2</label>
    </ligand>
</feature>
<feature type="binding site" evidence="2">
    <location>
        <position position="73"/>
    </location>
    <ligand>
        <name>Cu(2+)</name>
        <dbReference type="ChEBI" id="CHEBI:29036"/>
        <label>2</label>
    </ligand>
</feature>
<feature type="binding site" evidence="2">
    <location>
        <position position="74"/>
    </location>
    <ligand>
        <name>Cu(2+)</name>
        <dbReference type="ChEBI" id="CHEBI:29036"/>
        <label>2</label>
    </ligand>
</feature>
<feature type="binding site" evidence="2">
    <location>
        <position position="80"/>
    </location>
    <ligand>
        <name>Cu(2+)</name>
        <dbReference type="ChEBI" id="CHEBI:29036"/>
        <label>3</label>
    </ligand>
</feature>
<feature type="binding site" evidence="2">
    <location>
        <position position="81"/>
    </location>
    <ligand>
        <name>Cu(2+)</name>
        <dbReference type="ChEBI" id="CHEBI:29036"/>
        <label>3</label>
    </ligand>
</feature>
<feature type="binding site" evidence="2">
    <location>
        <position position="82"/>
    </location>
    <ligand>
        <name>Cu(2+)</name>
        <dbReference type="ChEBI" id="CHEBI:29036"/>
        <label>3</label>
    </ligand>
</feature>
<feature type="binding site" evidence="2">
    <location>
        <position position="88"/>
    </location>
    <ligand>
        <name>Cu(2+)</name>
        <dbReference type="ChEBI" id="CHEBI:29036"/>
        <label>4</label>
    </ligand>
</feature>
<feature type="binding site" evidence="2">
    <location>
        <position position="90"/>
    </location>
    <ligand>
        <name>Cu(2+)</name>
        <dbReference type="ChEBI" id="CHEBI:29036"/>
        <label>4</label>
    </ligand>
</feature>
<feature type="binding site" evidence="2">
    <location>
        <position position="91"/>
    </location>
    <ligand>
        <name>Cu(2+)</name>
        <dbReference type="ChEBI" id="CHEBI:29036"/>
        <label>4</label>
    </ligand>
</feature>
<feature type="lipid moiety-binding region" description="GPI-anchor amidated alanine" evidence="5">
    <location>
        <position position="232"/>
    </location>
</feature>
<feature type="glycosylation site" description="N-linked (GlcNAc...) asparagine" evidence="5">
    <location>
        <position position="174"/>
    </location>
</feature>
<feature type="glycosylation site" description="N-linked (GlcNAc...) asparagine" evidence="5">
    <location>
        <position position="184"/>
    </location>
</feature>
<feature type="glycosylation site" description="N-linked (GlcNAc...) asparagine" evidence="5">
    <location>
        <position position="199"/>
    </location>
</feature>
<feature type="disulfide bond" evidence="3">
    <location>
        <begin position="182"/>
        <end position="216"/>
    </location>
</feature>
<feature type="helix" evidence="8">
    <location>
        <begin position="147"/>
        <end position="154"/>
    </location>
</feature>
<feature type="helix" evidence="8">
    <location>
        <begin position="157"/>
        <end position="159"/>
    </location>
</feature>
<feature type="strand" evidence="8">
    <location>
        <begin position="173"/>
        <end position="176"/>
    </location>
</feature>
<feature type="helix" evidence="8">
    <location>
        <begin position="177"/>
        <end position="196"/>
    </location>
</feature>
<feature type="helix" evidence="8">
    <location>
        <begin position="202"/>
        <end position="222"/>
    </location>
</feature>
<feature type="helix" evidence="8">
    <location>
        <begin position="224"/>
        <end position="227"/>
    </location>
</feature>
<gene>
    <name type="primary">PRNP</name>
    <name type="synonym">PRP</name>
</gene>
<sequence>MVKSHIGSWILVLFVAMWSDVGLCKKRPKPGGGWNTGGSRYPGQGSPGGNRYPPQGGGGWGQPHGGGWGQPHGGGWGQPHGGGWGQPHGGGGWGQGGTHSQWNKPSKPKTNMKHVAGAAAAGAVVGGLGGYLLGSAMSRPLIHFGNDCEDRYYRENMYRYPNQVYYRSVDQYNNQSTFVHDCVNITVKQHTVTTTKGENFTETDIKMMERVVEQMCITQYQRESEAYYQRGASVILFSSPPVILLVSFLIFLIVG</sequence>
<organism>
    <name type="scientific">Canis lupus familiaris</name>
    <name type="common">Dog</name>
    <name type="synonym">Canis familiaris</name>
    <dbReference type="NCBI Taxonomy" id="9615"/>
    <lineage>
        <taxon>Eukaryota</taxon>
        <taxon>Metazoa</taxon>
        <taxon>Chordata</taxon>
        <taxon>Craniata</taxon>
        <taxon>Vertebrata</taxon>
        <taxon>Euteleostomi</taxon>
        <taxon>Mammalia</taxon>
        <taxon>Eutheria</taxon>
        <taxon>Laurasiatheria</taxon>
        <taxon>Carnivora</taxon>
        <taxon>Caniformia</taxon>
        <taxon>Canidae</taxon>
        <taxon>Canis</taxon>
    </lineage>
</organism>
<reference key="1">
    <citation type="submission" date="1997-09" db="EMBL/GenBank/DDBJ databases">
        <authorList>
            <person name="Rohwer R.G."/>
            <person name="Edelman D."/>
        </authorList>
    </citation>
    <scope>NUCLEOTIDE SEQUENCE [GENOMIC DNA]</scope>
</reference>
<reference key="2">
    <citation type="journal article" date="2005" name="Proc. Natl. Acad. Sci. U.S.A.">
        <title>Prion protein NMR structures of cats, dogs, pigs, and sheep.</title>
        <authorList>
            <person name="Lysek D.A."/>
            <person name="Schorn C."/>
            <person name="Nivon L.G."/>
            <person name="Esteve-Moya V."/>
            <person name="Christen B."/>
            <person name="Calzolai L."/>
            <person name="von Schroetter C."/>
            <person name="Fiorito F."/>
            <person name="Herrmann T."/>
            <person name="Guentert P."/>
            <person name="Wuethrich K."/>
        </authorList>
    </citation>
    <scope>STRUCTURE BY NMR OF 124-233</scope>
</reference>